<evidence type="ECO:0000255" key="1">
    <source>
        <dbReference type="HAMAP-Rule" id="MF_00140"/>
    </source>
</evidence>
<protein>
    <recommendedName>
        <fullName evidence="1">Tryptophan--tRNA ligase</fullName>
        <ecNumber evidence="1">6.1.1.2</ecNumber>
    </recommendedName>
    <alternativeName>
        <fullName evidence="1">Tryptophanyl-tRNA synthetase</fullName>
        <shortName evidence="1">TrpRS</shortName>
    </alternativeName>
</protein>
<comment type="function">
    <text evidence="1">Catalyzes the attachment of tryptophan to tRNA(Trp).</text>
</comment>
<comment type="catalytic activity">
    <reaction evidence="1">
        <text>tRNA(Trp) + L-tryptophan + ATP = L-tryptophyl-tRNA(Trp) + AMP + diphosphate + H(+)</text>
        <dbReference type="Rhea" id="RHEA:24080"/>
        <dbReference type="Rhea" id="RHEA-COMP:9671"/>
        <dbReference type="Rhea" id="RHEA-COMP:9705"/>
        <dbReference type="ChEBI" id="CHEBI:15378"/>
        <dbReference type="ChEBI" id="CHEBI:30616"/>
        <dbReference type="ChEBI" id="CHEBI:33019"/>
        <dbReference type="ChEBI" id="CHEBI:57912"/>
        <dbReference type="ChEBI" id="CHEBI:78442"/>
        <dbReference type="ChEBI" id="CHEBI:78535"/>
        <dbReference type="ChEBI" id="CHEBI:456215"/>
        <dbReference type="EC" id="6.1.1.2"/>
    </reaction>
</comment>
<comment type="subunit">
    <text evidence="1">Homodimer.</text>
</comment>
<comment type="subcellular location">
    <subcellularLocation>
        <location evidence="1">Cytoplasm</location>
    </subcellularLocation>
</comment>
<comment type="similarity">
    <text evidence="1">Belongs to the class-I aminoacyl-tRNA synthetase family.</text>
</comment>
<organism>
    <name type="scientific">Blochmanniella floridana</name>
    <dbReference type="NCBI Taxonomy" id="203907"/>
    <lineage>
        <taxon>Bacteria</taxon>
        <taxon>Pseudomonadati</taxon>
        <taxon>Pseudomonadota</taxon>
        <taxon>Gammaproteobacteria</taxon>
        <taxon>Enterobacterales</taxon>
        <taxon>Enterobacteriaceae</taxon>
        <taxon>ant endosymbionts</taxon>
        <taxon>Candidatus Blochmanniella</taxon>
    </lineage>
</organism>
<reference key="1">
    <citation type="journal article" date="2003" name="Proc. Natl. Acad. Sci. U.S.A.">
        <title>The genome sequence of Blochmannia floridanus: comparative analysis of reduced genomes.</title>
        <authorList>
            <person name="Gil R."/>
            <person name="Silva F.J."/>
            <person name="Zientz E."/>
            <person name="Delmotte F."/>
            <person name="Gonzalez-Candelas F."/>
            <person name="Latorre A."/>
            <person name="Rausell C."/>
            <person name="Kamerbeek J."/>
            <person name="Gadau J."/>
            <person name="Hoelldobler B."/>
            <person name="van Ham R.C.H.J."/>
            <person name="Gross R."/>
            <person name="Moya A."/>
        </authorList>
    </citation>
    <scope>NUCLEOTIDE SEQUENCE [LARGE SCALE GENOMIC DNA]</scope>
</reference>
<feature type="chain" id="PRO_0000136615" description="Tryptophan--tRNA ligase">
    <location>
        <begin position="1"/>
        <end position="334"/>
    </location>
</feature>
<feature type="short sequence motif" description="'HIGH' region" evidence="1">
    <location>
        <begin position="12"/>
        <end position="20"/>
    </location>
</feature>
<feature type="short sequence motif" description="'KMSKS' region" evidence="1">
    <location>
        <begin position="195"/>
        <end position="199"/>
    </location>
</feature>
<feature type="binding site" evidence="1">
    <location>
        <begin position="11"/>
        <end position="13"/>
    </location>
    <ligand>
        <name>ATP</name>
        <dbReference type="ChEBI" id="CHEBI:30616"/>
    </ligand>
</feature>
<feature type="binding site" evidence="1">
    <location>
        <begin position="19"/>
        <end position="20"/>
    </location>
    <ligand>
        <name>ATP</name>
        <dbReference type="ChEBI" id="CHEBI:30616"/>
    </ligand>
</feature>
<feature type="binding site" evidence="1">
    <location>
        <position position="135"/>
    </location>
    <ligand>
        <name>L-tryptophan</name>
        <dbReference type="ChEBI" id="CHEBI:57912"/>
    </ligand>
</feature>
<feature type="binding site" evidence="1">
    <location>
        <begin position="147"/>
        <end position="149"/>
    </location>
    <ligand>
        <name>ATP</name>
        <dbReference type="ChEBI" id="CHEBI:30616"/>
    </ligand>
</feature>
<feature type="binding site" evidence="1">
    <location>
        <position position="186"/>
    </location>
    <ligand>
        <name>ATP</name>
        <dbReference type="ChEBI" id="CHEBI:30616"/>
    </ligand>
</feature>
<feature type="binding site" evidence="1">
    <location>
        <begin position="195"/>
        <end position="199"/>
    </location>
    <ligand>
        <name>ATP</name>
        <dbReference type="ChEBI" id="CHEBI:30616"/>
    </ligand>
</feature>
<proteinExistence type="inferred from homology"/>
<sequence length="334" mass="37927">MNKSIVFSGAQPTGKLTIGNYIGSIRHWVEMQKHYQCIYCIVDLHSITVRNNLCSLHTRSLDTLALYLACGINPDISTIFIQSHVPEHSQLNWILNCYTYYGELNRMVQFKEKSSRYKNNINVGLFNYPILMASDILLYQTDFVPVGEDQRQHVELVRDIARRFNNIFGTVFKIPNVLISMYGSRIMSLLNPTRKMSKSDPDPNSYITLLDNVDCISKKIQGAVTDSDSPAAICFDPIKKPGISNLLAILSGISGQSILNLEESFQSKTYAQLKDVVIQELSCMLKDLQCRYISERSNEGKLNHILNVGSQKARMQAQITFKKVNELMGFYKES</sequence>
<accession>Q7VRN5</accession>
<keyword id="KW-0030">Aminoacyl-tRNA synthetase</keyword>
<keyword id="KW-0067">ATP-binding</keyword>
<keyword id="KW-0963">Cytoplasm</keyword>
<keyword id="KW-0436">Ligase</keyword>
<keyword id="KW-0547">Nucleotide-binding</keyword>
<keyword id="KW-0648">Protein biosynthesis</keyword>
<keyword id="KW-1185">Reference proteome</keyword>
<name>SYW_BLOFL</name>
<dbReference type="EC" id="6.1.1.2" evidence="1"/>
<dbReference type="EMBL" id="BX248583">
    <property type="protein sequence ID" value="CAD83251.1"/>
    <property type="molecule type" value="Genomic_DNA"/>
</dbReference>
<dbReference type="SMR" id="Q7VRN5"/>
<dbReference type="STRING" id="203907.Bfl569"/>
<dbReference type="KEGG" id="bfl:Bfl569"/>
<dbReference type="eggNOG" id="COG0180">
    <property type="taxonomic scope" value="Bacteria"/>
</dbReference>
<dbReference type="HOGENOM" id="CLU_029244_1_1_6"/>
<dbReference type="OrthoDB" id="9801042at2"/>
<dbReference type="Proteomes" id="UP000002192">
    <property type="component" value="Chromosome"/>
</dbReference>
<dbReference type="GO" id="GO:0005829">
    <property type="term" value="C:cytosol"/>
    <property type="evidence" value="ECO:0007669"/>
    <property type="project" value="TreeGrafter"/>
</dbReference>
<dbReference type="GO" id="GO:0005524">
    <property type="term" value="F:ATP binding"/>
    <property type="evidence" value="ECO:0007669"/>
    <property type="project" value="UniProtKB-UniRule"/>
</dbReference>
<dbReference type="GO" id="GO:0004830">
    <property type="term" value="F:tryptophan-tRNA ligase activity"/>
    <property type="evidence" value="ECO:0007669"/>
    <property type="project" value="UniProtKB-UniRule"/>
</dbReference>
<dbReference type="GO" id="GO:0006436">
    <property type="term" value="P:tryptophanyl-tRNA aminoacylation"/>
    <property type="evidence" value="ECO:0007669"/>
    <property type="project" value="UniProtKB-UniRule"/>
</dbReference>
<dbReference type="CDD" id="cd00806">
    <property type="entry name" value="TrpRS_core"/>
    <property type="match status" value="1"/>
</dbReference>
<dbReference type="FunFam" id="1.10.240.10:FF:000002">
    <property type="entry name" value="Tryptophan--tRNA ligase"/>
    <property type="match status" value="1"/>
</dbReference>
<dbReference type="Gene3D" id="3.40.50.620">
    <property type="entry name" value="HUPs"/>
    <property type="match status" value="1"/>
</dbReference>
<dbReference type="Gene3D" id="1.10.240.10">
    <property type="entry name" value="Tyrosyl-Transfer RNA Synthetase"/>
    <property type="match status" value="1"/>
</dbReference>
<dbReference type="HAMAP" id="MF_00140_B">
    <property type="entry name" value="Trp_tRNA_synth_B"/>
    <property type="match status" value="1"/>
</dbReference>
<dbReference type="InterPro" id="IPR001412">
    <property type="entry name" value="aa-tRNA-synth_I_CS"/>
</dbReference>
<dbReference type="InterPro" id="IPR002305">
    <property type="entry name" value="aa-tRNA-synth_Ic"/>
</dbReference>
<dbReference type="InterPro" id="IPR014729">
    <property type="entry name" value="Rossmann-like_a/b/a_fold"/>
</dbReference>
<dbReference type="InterPro" id="IPR002306">
    <property type="entry name" value="Trp-tRNA-ligase"/>
</dbReference>
<dbReference type="InterPro" id="IPR024109">
    <property type="entry name" value="Trp-tRNA-ligase_bac-type"/>
</dbReference>
<dbReference type="InterPro" id="IPR050203">
    <property type="entry name" value="Trp-tRNA_synthetase"/>
</dbReference>
<dbReference type="NCBIfam" id="TIGR00233">
    <property type="entry name" value="trpS"/>
    <property type="match status" value="1"/>
</dbReference>
<dbReference type="PANTHER" id="PTHR43766">
    <property type="entry name" value="TRYPTOPHAN--TRNA LIGASE, MITOCHONDRIAL"/>
    <property type="match status" value="1"/>
</dbReference>
<dbReference type="PANTHER" id="PTHR43766:SF1">
    <property type="entry name" value="TRYPTOPHAN--TRNA LIGASE, MITOCHONDRIAL"/>
    <property type="match status" value="1"/>
</dbReference>
<dbReference type="Pfam" id="PF00579">
    <property type="entry name" value="tRNA-synt_1b"/>
    <property type="match status" value="1"/>
</dbReference>
<dbReference type="PRINTS" id="PR01039">
    <property type="entry name" value="TRNASYNTHTRP"/>
</dbReference>
<dbReference type="SUPFAM" id="SSF52374">
    <property type="entry name" value="Nucleotidylyl transferase"/>
    <property type="match status" value="1"/>
</dbReference>
<dbReference type="PROSITE" id="PS00178">
    <property type="entry name" value="AA_TRNA_LIGASE_I"/>
    <property type="match status" value="1"/>
</dbReference>
<gene>
    <name evidence="1" type="primary">trpS</name>
    <name type="ordered locus">Bfl569</name>
</gene>